<keyword id="KW-0963">Cytoplasm</keyword>
<keyword id="KW-0227">DNA damage</keyword>
<keyword id="KW-0233">DNA recombination</keyword>
<keyword id="KW-0234">DNA repair</keyword>
<keyword id="KW-0238">DNA-binding</keyword>
<keyword id="KW-1185">Reference proteome</keyword>
<reference key="1">
    <citation type="journal article" date="2004" name="Genome Res.">
        <title>The genome sequence of Mycoplasma mycoides subsp. mycoides SC type strain PG1T, the causative agent of contagious bovine pleuropneumonia (CBPP).</title>
        <authorList>
            <person name="Westberg J."/>
            <person name="Persson A."/>
            <person name="Holmberg A."/>
            <person name="Goesmann A."/>
            <person name="Lundeberg J."/>
            <person name="Johansson K.-E."/>
            <person name="Pettersson B."/>
            <person name="Uhlen M."/>
        </authorList>
    </citation>
    <scope>NUCLEOTIDE SEQUENCE [LARGE SCALE GENOMIC DNA]</scope>
    <source>
        <strain>CCUG 32753 / NCTC 10114 / PG1</strain>
    </source>
</reference>
<protein>
    <recommendedName>
        <fullName evidence="1">Holliday junction branch migration complex subunit RuvA</fullName>
    </recommendedName>
</protein>
<organism>
    <name type="scientific">Mycoplasma mycoides subsp. mycoides SC (strain CCUG 32753 / NCTC 10114 / PG1)</name>
    <dbReference type="NCBI Taxonomy" id="272632"/>
    <lineage>
        <taxon>Bacteria</taxon>
        <taxon>Bacillati</taxon>
        <taxon>Mycoplasmatota</taxon>
        <taxon>Mollicutes</taxon>
        <taxon>Mycoplasmataceae</taxon>
        <taxon>Mycoplasma</taxon>
    </lineage>
</organism>
<comment type="function">
    <text evidence="1">The RuvA-RuvB-RuvC complex processes Holliday junction (HJ) DNA during genetic recombination and DNA repair, while the RuvA-RuvB complex plays an important role in the rescue of blocked DNA replication forks via replication fork reversal (RFR). RuvA specifically binds to HJ cruciform DNA, conferring on it an open structure. The RuvB hexamer acts as an ATP-dependent pump, pulling dsDNA into and through the RuvAB complex. HJ branch migration allows RuvC to scan DNA until it finds its consensus sequence, where it cleaves and resolves the cruciform DNA.</text>
</comment>
<comment type="subunit">
    <text evidence="1">Homotetramer. Forms an RuvA(8)-RuvB(12)-Holliday junction (HJ) complex. HJ DNA is sandwiched between 2 RuvA tetramers; dsDNA enters through RuvA and exits via RuvB. An RuvB hexamer assembles on each DNA strand where it exits the tetramer. Each RuvB hexamer is contacted by two RuvA subunits (via domain III) on 2 adjacent RuvB subunits; this complex drives branch migration. In the full resolvosome a probable DNA-RuvA(4)-RuvB(12)-RuvC(2) complex forms which resolves the HJ.</text>
</comment>
<comment type="subcellular location">
    <subcellularLocation>
        <location evidence="1">Cytoplasm</location>
    </subcellularLocation>
</comment>
<comment type="domain">
    <text evidence="1">Has three domains with a flexible linker between the domains II and III and assumes an 'L' shape. Domain III is highly mobile and contacts RuvB.</text>
</comment>
<comment type="similarity">
    <text evidence="1">Belongs to the RuvA family.</text>
</comment>
<accession>Q6MT68</accession>
<feature type="chain" id="PRO_1000195164" description="Holliday junction branch migration complex subunit RuvA">
    <location>
        <begin position="1"/>
        <end position="186"/>
    </location>
</feature>
<feature type="region of interest" description="Domain I" evidence="1">
    <location>
        <begin position="1"/>
        <end position="63"/>
    </location>
</feature>
<feature type="region of interest" description="Domain II" evidence="1">
    <location>
        <begin position="64"/>
        <end position="137"/>
    </location>
</feature>
<feature type="region of interest" description="Domain III" evidence="1">
    <location>
        <begin position="137"/>
        <end position="186"/>
    </location>
</feature>
<feature type="region of interest" description="Flexible linker" evidence="1">
    <location>
        <position position="137"/>
    </location>
</feature>
<evidence type="ECO:0000255" key="1">
    <source>
        <dbReference type="HAMAP-Rule" id="MF_00031"/>
    </source>
</evidence>
<name>RUVA_MYCMS</name>
<gene>
    <name evidence="1" type="primary">ruvA</name>
    <name type="ordered locus">MSC_0542</name>
</gene>
<dbReference type="EMBL" id="BX293980">
    <property type="protein sequence ID" value="CAE77168.1"/>
    <property type="molecule type" value="Genomic_DNA"/>
</dbReference>
<dbReference type="RefSeq" id="NP_975526.1">
    <property type="nucleotide sequence ID" value="NC_005364.2"/>
</dbReference>
<dbReference type="RefSeq" id="WP_011166724.1">
    <property type="nucleotide sequence ID" value="NC_005364.2"/>
</dbReference>
<dbReference type="SMR" id="Q6MT68"/>
<dbReference type="STRING" id="272632.MSC_0542"/>
<dbReference type="KEGG" id="mmy:MSC_0542"/>
<dbReference type="PATRIC" id="fig|272632.4.peg.586"/>
<dbReference type="eggNOG" id="COG0632">
    <property type="taxonomic scope" value="Bacteria"/>
</dbReference>
<dbReference type="HOGENOM" id="CLU_087936_3_1_14"/>
<dbReference type="Proteomes" id="UP000001016">
    <property type="component" value="Chromosome"/>
</dbReference>
<dbReference type="GO" id="GO:0005737">
    <property type="term" value="C:cytoplasm"/>
    <property type="evidence" value="ECO:0007669"/>
    <property type="project" value="UniProtKB-SubCell"/>
</dbReference>
<dbReference type="GO" id="GO:0048476">
    <property type="term" value="C:Holliday junction resolvase complex"/>
    <property type="evidence" value="ECO:0007669"/>
    <property type="project" value="UniProtKB-UniRule"/>
</dbReference>
<dbReference type="GO" id="GO:0003678">
    <property type="term" value="F:DNA helicase activity"/>
    <property type="evidence" value="ECO:0007669"/>
    <property type="project" value="InterPro"/>
</dbReference>
<dbReference type="GO" id="GO:0000400">
    <property type="term" value="F:four-way junction DNA binding"/>
    <property type="evidence" value="ECO:0007669"/>
    <property type="project" value="UniProtKB-UniRule"/>
</dbReference>
<dbReference type="GO" id="GO:0006310">
    <property type="term" value="P:DNA recombination"/>
    <property type="evidence" value="ECO:0007669"/>
    <property type="project" value="UniProtKB-UniRule"/>
</dbReference>
<dbReference type="GO" id="GO:0006281">
    <property type="term" value="P:DNA repair"/>
    <property type="evidence" value="ECO:0007669"/>
    <property type="project" value="UniProtKB-UniRule"/>
</dbReference>
<dbReference type="Gene3D" id="1.10.150.20">
    <property type="entry name" value="5' to 3' exonuclease, C-terminal subdomain"/>
    <property type="match status" value="1"/>
</dbReference>
<dbReference type="Gene3D" id="2.40.50.140">
    <property type="entry name" value="Nucleic acid-binding proteins"/>
    <property type="match status" value="1"/>
</dbReference>
<dbReference type="HAMAP" id="MF_00031">
    <property type="entry name" value="DNA_HJ_migration_RuvA"/>
    <property type="match status" value="1"/>
</dbReference>
<dbReference type="InterPro" id="IPR003583">
    <property type="entry name" value="Hlx-hairpin-Hlx_DNA-bd_motif"/>
</dbReference>
<dbReference type="InterPro" id="IPR012340">
    <property type="entry name" value="NA-bd_OB-fold"/>
</dbReference>
<dbReference type="InterPro" id="IPR000085">
    <property type="entry name" value="RuvA"/>
</dbReference>
<dbReference type="InterPro" id="IPR010994">
    <property type="entry name" value="RuvA_2-like"/>
</dbReference>
<dbReference type="NCBIfam" id="TIGR00084">
    <property type="entry name" value="ruvA"/>
    <property type="match status" value="1"/>
</dbReference>
<dbReference type="Pfam" id="PF14520">
    <property type="entry name" value="HHH_5"/>
    <property type="match status" value="1"/>
</dbReference>
<dbReference type="SMART" id="SM00278">
    <property type="entry name" value="HhH1"/>
    <property type="match status" value="2"/>
</dbReference>
<dbReference type="SUPFAM" id="SSF50249">
    <property type="entry name" value="Nucleic acid-binding proteins"/>
    <property type="match status" value="1"/>
</dbReference>
<dbReference type="SUPFAM" id="SSF47781">
    <property type="entry name" value="RuvA domain 2-like"/>
    <property type="match status" value="1"/>
</dbReference>
<proteinExistence type="inferred from homology"/>
<sequence>MNDYINGLLHKIDDKYLYIELNNSGYRFLYLKTDLKDLKLNQNNQVYVAINVIDNVFKYYGFKNQLIRDLFELLININTIGEKTAFLILENYNYNELIDIFKNGRTDKILQLKGIGNYTARLIINSVQKELFNNKISDKKNKVITSLEKLGYKTKDIYKIIINIDEDMNIEDLTKYVLEQLSYLHN</sequence>